<accession>Q9Y468</accession>
<accession>B4DRC9</accession>
<accession>E1P5W7</accession>
<accession>Q5H8Y8</accession>
<accession>Q5H8Y9</accession>
<accession>Q8IUV7</accession>
<accession>Q9H1E6</accession>
<accession>Q9H1G5</accession>
<accession>Q9UG06</accession>
<accession>Q9UJB9</accession>
<accession>Q9Y4C9</accession>
<dbReference type="EMBL" id="U89358">
    <property type="protein sequence ID" value="AAC69438.1"/>
    <property type="molecule type" value="mRNA"/>
</dbReference>
<dbReference type="EMBL" id="AK299199">
    <property type="protein sequence ID" value="BAG61241.1"/>
    <property type="molecule type" value="mRNA"/>
</dbReference>
<dbReference type="EMBL" id="AL110279">
    <property type="protein sequence ID" value="CAB53714.1"/>
    <property type="molecule type" value="mRNA"/>
</dbReference>
<dbReference type="EMBL" id="AL031681">
    <property type="status" value="NOT_ANNOTATED_CDS"/>
    <property type="molecule type" value="Genomic_DNA"/>
</dbReference>
<dbReference type="EMBL" id="Z98752">
    <property type="status" value="NOT_ANNOTATED_CDS"/>
    <property type="molecule type" value="Genomic_DNA"/>
</dbReference>
<dbReference type="EMBL" id="CH471077">
    <property type="protein sequence ID" value="EAW75958.1"/>
    <property type="status" value="ALT_SEQ"/>
    <property type="molecule type" value="Genomic_DNA"/>
</dbReference>
<dbReference type="EMBL" id="CH471077">
    <property type="protein sequence ID" value="EAW75961.1"/>
    <property type="status" value="ALT_SEQ"/>
    <property type="molecule type" value="Genomic_DNA"/>
</dbReference>
<dbReference type="EMBL" id="CH471077">
    <property type="protein sequence ID" value="EAW75962.1"/>
    <property type="status" value="ALT_SEQ"/>
    <property type="molecule type" value="Genomic_DNA"/>
</dbReference>
<dbReference type="EMBL" id="BC039820">
    <property type="protein sequence ID" value="AAH39820.1"/>
    <property type="molecule type" value="mRNA"/>
</dbReference>
<dbReference type="EMBL" id="AB014581">
    <property type="protein sequence ID" value="BAA31656.1"/>
    <property type="molecule type" value="mRNA"/>
</dbReference>
<dbReference type="CCDS" id="CCDS13319.1">
    <molecule id="Q9Y468-1"/>
</dbReference>
<dbReference type="CCDS" id="CCDS46602.2">
    <molecule id="Q9Y468-5"/>
</dbReference>
<dbReference type="CCDS" id="CCDS93046.1">
    <molecule id="Q9Y468-4"/>
</dbReference>
<dbReference type="PIR" id="T14794">
    <property type="entry name" value="T14794"/>
</dbReference>
<dbReference type="RefSeq" id="NP_001364237.1">
    <molecule id="Q9Y468-4"/>
    <property type="nucleotide sequence ID" value="NM_001377308.1"/>
</dbReference>
<dbReference type="RefSeq" id="NP_001364239.1">
    <molecule id="Q9Y468-2"/>
    <property type="nucleotide sequence ID" value="NM_001377310.1"/>
</dbReference>
<dbReference type="RefSeq" id="NP_056293.4">
    <molecule id="Q9Y468-1"/>
    <property type="nucleotide sequence ID" value="NM_015478.6"/>
</dbReference>
<dbReference type="RefSeq" id="NP_115479.4">
    <molecule id="Q9Y468-5"/>
    <property type="nucleotide sequence ID" value="NM_032107.4"/>
</dbReference>
<dbReference type="PDB" id="1OYX">
    <property type="method" value="X-ray"/>
    <property type="resolution" value="1.85 A"/>
    <property type="chains" value="A/B/C=265-595"/>
</dbReference>
<dbReference type="PDB" id="1OZ2">
    <property type="method" value="X-ray"/>
    <property type="resolution" value="1.55 A"/>
    <property type="chains" value="A=265-595"/>
</dbReference>
<dbReference type="PDB" id="1OZ3">
    <property type="method" value="X-ray"/>
    <property type="resolution" value="1.85 A"/>
    <property type="chains" value="A/B/C=265-595"/>
</dbReference>
<dbReference type="PDB" id="2PQW">
    <property type="method" value="X-ray"/>
    <property type="resolution" value="2.00 A"/>
    <property type="chains" value="A=268-590"/>
</dbReference>
<dbReference type="PDB" id="2RHI">
    <property type="method" value="X-ray"/>
    <property type="resolution" value="1.66 A"/>
    <property type="chains" value="A=265-594"/>
</dbReference>
<dbReference type="PDB" id="2RHU">
    <property type="method" value="X-ray"/>
    <property type="resolution" value="1.90 A"/>
    <property type="chains" value="A=274-587"/>
</dbReference>
<dbReference type="PDB" id="2RHX">
    <property type="method" value="X-ray"/>
    <property type="resolution" value="2.10 A"/>
    <property type="chains" value="A=265-594"/>
</dbReference>
<dbReference type="PDB" id="2RHY">
    <property type="method" value="X-ray"/>
    <property type="resolution" value="1.90 A"/>
    <property type="chains" value="A=274-587"/>
</dbReference>
<dbReference type="PDB" id="2RHZ">
    <property type="method" value="X-ray"/>
    <property type="resolution" value="2.20 A"/>
    <property type="chains" value="A=274-587"/>
</dbReference>
<dbReference type="PDB" id="2RI2">
    <property type="method" value="X-ray"/>
    <property type="resolution" value="2.20 A"/>
    <property type="chains" value="A=274-587"/>
</dbReference>
<dbReference type="PDB" id="2RI3">
    <property type="method" value="X-ray"/>
    <property type="resolution" value="2.00 A"/>
    <property type="chains" value="A=274-587"/>
</dbReference>
<dbReference type="PDB" id="2RI5">
    <property type="method" value="X-ray"/>
    <property type="resolution" value="2.00 A"/>
    <property type="chains" value="A=274-587"/>
</dbReference>
<dbReference type="PDB" id="2RJC">
    <property type="method" value="X-ray"/>
    <property type="resolution" value="2.00 A"/>
    <property type="chains" value="A/B/C=268-598"/>
</dbReference>
<dbReference type="PDB" id="2RJD">
    <property type="method" value="X-ray"/>
    <property type="resolution" value="1.65 A"/>
    <property type="chains" value="A=268-598"/>
</dbReference>
<dbReference type="PDB" id="2RJE">
    <property type="method" value="X-ray"/>
    <property type="resolution" value="1.86 A"/>
    <property type="chains" value="A/B/C=268-598"/>
</dbReference>
<dbReference type="PDB" id="2RJF">
    <property type="method" value="X-ray"/>
    <property type="resolution" value="2.05 A"/>
    <property type="chains" value="A/C/E=268-598"/>
</dbReference>
<dbReference type="PDB" id="3OQ5">
    <property type="method" value="X-ray"/>
    <property type="resolution" value="2.50 A"/>
    <property type="chains" value="A/B/C=259-598"/>
</dbReference>
<dbReference type="PDB" id="3P8H">
    <property type="method" value="X-ray"/>
    <property type="resolution" value="2.55 A"/>
    <property type="chains" value="A/B/C=268-590"/>
</dbReference>
<dbReference type="PDB" id="3UWN">
    <property type="method" value="X-ray"/>
    <property type="resolution" value="2.15 A"/>
    <property type="chains" value="A=268-598"/>
</dbReference>
<dbReference type="PDB" id="6BYB">
    <property type="method" value="X-ray"/>
    <property type="resolution" value="1.74 A"/>
    <property type="chains" value="A=200-522"/>
</dbReference>
<dbReference type="PDBsum" id="1OYX"/>
<dbReference type="PDBsum" id="1OZ2"/>
<dbReference type="PDBsum" id="1OZ3"/>
<dbReference type="PDBsum" id="2PQW"/>
<dbReference type="PDBsum" id="2RHI"/>
<dbReference type="PDBsum" id="2RHU"/>
<dbReference type="PDBsum" id="2RHX"/>
<dbReference type="PDBsum" id="2RHY"/>
<dbReference type="PDBsum" id="2RHZ"/>
<dbReference type="PDBsum" id="2RI2"/>
<dbReference type="PDBsum" id="2RI3"/>
<dbReference type="PDBsum" id="2RI5"/>
<dbReference type="PDBsum" id="2RJC"/>
<dbReference type="PDBsum" id="2RJD"/>
<dbReference type="PDBsum" id="2RJE"/>
<dbReference type="PDBsum" id="2RJF"/>
<dbReference type="PDBsum" id="3OQ5"/>
<dbReference type="PDBsum" id="3P8H"/>
<dbReference type="PDBsum" id="3UWN"/>
<dbReference type="PDBsum" id="6BYB"/>
<dbReference type="SMR" id="Q9Y468"/>
<dbReference type="BioGRID" id="117486">
    <property type="interactions" value="116"/>
</dbReference>
<dbReference type="ComplexPortal" id="CPX-469">
    <property type="entry name" value="L3MBTL1 complex"/>
</dbReference>
<dbReference type="DIP" id="DIP-29628N"/>
<dbReference type="FunCoup" id="Q9Y468">
    <property type="interactions" value="1700"/>
</dbReference>
<dbReference type="IntAct" id="Q9Y468">
    <property type="interactions" value="102"/>
</dbReference>
<dbReference type="MINT" id="Q9Y468"/>
<dbReference type="STRING" id="9606.ENSP00000402107"/>
<dbReference type="BindingDB" id="Q9Y468"/>
<dbReference type="ChEMBL" id="CHEMBL1287622"/>
<dbReference type="DrugBank" id="DB03814">
    <property type="generic name" value="2-(N-morpholino)ethanesulfonic acid"/>
</dbReference>
<dbReference type="DrugCentral" id="Q9Y468"/>
<dbReference type="GlyGen" id="Q9Y468">
    <property type="glycosylation" value="2 sites, 1 O-linked glycan (1 site)"/>
</dbReference>
<dbReference type="iPTMnet" id="Q9Y468"/>
<dbReference type="PhosphoSitePlus" id="Q9Y468"/>
<dbReference type="BioMuta" id="L3MBTL1"/>
<dbReference type="DMDM" id="325511398"/>
<dbReference type="jPOST" id="Q9Y468"/>
<dbReference type="MassIVE" id="Q9Y468"/>
<dbReference type="PaxDb" id="9606-ENSP00000398516"/>
<dbReference type="PeptideAtlas" id="Q9Y468"/>
<dbReference type="ProteomicsDB" id="86115">
    <molecule id="Q9Y468-4"/>
</dbReference>
<dbReference type="ProteomicsDB" id="86116">
    <molecule id="Q9Y468-1"/>
</dbReference>
<dbReference type="ProteomicsDB" id="86117">
    <molecule id="Q9Y468-2"/>
</dbReference>
<dbReference type="ProteomicsDB" id="86118">
    <molecule id="Q9Y468-3"/>
</dbReference>
<dbReference type="ProteomicsDB" id="86119">
    <molecule id="Q9Y468-5"/>
</dbReference>
<dbReference type="ABCD" id="Q9Y468">
    <property type="antibodies" value="3 sequenced antibodies"/>
</dbReference>
<dbReference type="Antibodypedia" id="27135">
    <property type="antibodies" value="155 antibodies from 26 providers"/>
</dbReference>
<dbReference type="DNASU" id="26013"/>
<dbReference type="Ensembl" id="ENST00000373135.8">
    <molecule id="Q9Y468-1"/>
    <property type="protein sequence ID" value="ENSP00000362227.3"/>
    <property type="gene ID" value="ENSG00000185513.18"/>
</dbReference>
<dbReference type="Ensembl" id="ENST00000422861.3">
    <molecule id="Q9Y468-4"/>
    <property type="protein sequence ID" value="ENSP00000410139.2"/>
    <property type="gene ID" value="ENSG00000185513.18"/>
</dbReference>
<dbReference type="Ensembl" id="ENST00000427442.8">
    <molecule id="Q9Y468-5"/>
    <property type="protein sequence ID" value="ENSP00000402107.4"/>
    <property type="gene ID" value="ENSG00000185513.18"/>
</dbReference>
<dbReference type="GeneID" id="26013"/>
<dbReference type="KEGG" id="hsa:26013"/>
<dbReference type="UCSC" id="uc002xkl.4">
    <molecule id="Q9Y468-5"/>
    <property type="organism name" value="human"/>
</dbReference>
<dbReference type="AGR" id="HGNC:15905"/>
<dbReference type="CTD" id="26013"/>
<dbReference type="DisGeNET" id="26013"/>
<dbReference type="GeneCards" id="L3MBTL1"/>
<dbReference type="HGNC" id="HGNC:15905">
    <property type="gene designation" value="L3MBTL1"/>
</dbReference>
<dbReference type="HPA" id="ENSG00000185513">
    <property type="expression patterns" value="Tissue enhanced (brain)"/>
</dbReference>
<dbReference type="MIM" id="608802">
    <property type="type" value="gene"/>
</dbReference>
<dbReference type="neXtProt" id="NX_Q9Y468"/>
<dbReference type="OpenTargets" id="ENSG00000185513"/>
<dbReference type="PharmGKB" id="PA30260"/>
<dbReference type="VEuPathDB" id="HostDB:ENSG00000185513"/>
<dbReference type="eggNOG" id="KOG3766">
    <property type="taxonomic scope" value="Eukaryota"/>
</dbReference>
<dbReference type="GeneTree" id="ENSGT00940000159708"/>
<dbReference type="HOGENOM" id="CLU_004064_0_0_1"/>
<dbReference type="InParanoid" id="Q9Y468"/>
<dbReference type="OMA" id="DSACRCQ"/>
<dbReference type="OrthoDB" id="8188861at2759"/>
<dbReference type="PAN-GO" id="Q9Y468">
    <property type="GO annotations" value="4 GO annotations based on evolutionary models"/>
</dbReference>
<dbReference type="PhylomeDB" id="Q9Y468"/>
<dbReference type="TreeFam" id="TF316498"/>
<dbReference type="PathwayCommons" id="Q9Y468"/>
<dbReference type="Reactome" id="R-HSA-6804760">
    <property type="pathway name" value="Regulation of TP53 Activity through Methylation"/>
</dbReference>
<dbReference type="SignaLink" id="Q9Y468"/>
<dbReference type="SIGNOR" id="Q9Y468"/>
<dbReference type="BioGRID-ORCS" id="26013">
    <property type="hits" value="11 hits in 1186 CRISPR screens"/>
</dbReference>
<dbReference type="ChiTaRS" id="L3MBTL1">
    <property type="organism name" value="human"/>
</dbReference>
<dbReference type="EvolutionaryTrace" id="Q9Y468"/>
<dbReference type="GeneWiki" id="L3MBTL"/>
<dbReference type="GenomeRNAi" id="26013"/>
<dbReference type="Pharos" id="Q9Y468">
    <property type="development level" value="Tchem"/>
</dbReference>
<dbReference type="PRO" id="PR:Q9Y468"/>
<dbReference type="Proteomes" id="UP000005640">
    <property type="component" value="Chromosome 20"/>
</dbReference>
<dbReference type="RNAct" id="Q9Y468">
    <property type="molecule type" value="protein"/>
</dbReference>
<dbReference type="Bgee" id="ENSG00000185513">
    <property type="expression patterns" value="Expressed in right hemisphere of cerebellum and 161 other cell types or tissues"/>
</dbReference>
<dbReference type="ExpressionAtlas" id="Q9Y468">
    <property type="expression patterns" value="baseline and differential"/>
</dbReference>
<dbReference type="GO" id="GO:0000785">
    <property type="term" value="C:chromatin"/>
    <property type="evidence" value="ECO:0000314"/>
    <property type="project" value="UniProtKB"/>
</dbReference>
<dbReference type="GO" id="GO:0061793">
    <property type="term" value="C:chromatin lock complex"/>
    <property type="evidence" value="ECO:0000353"/>
    <property type="project" value="ComplexPortal"/>
</dbReference>
<dbReference type="GO" id="GO:0000793">
    <property type="term" value="C:condensed chromosome"/>
    <property type="evidence" value="ECO:0000314"/>
    <property type="project" value="UniProtKB"/>
</dbReference>
<dbReference type="GO" id="GO:0005654">
    <property type="term" value="C:nucleoplasm"/>
    <property type="evidence" value="ECO:0000314"/>
    <property type="project" value="UniProtKB"/>
</dbReference>
<dbReference type="GO" id="GO:0005634">
    <property type="term" value="C:nucleus"/>
    <property type="evidence" value="ECO:0000314"/>
    <property type="project" value="UniProtKB"/>
</dbReference>
<dbReference type="GO" id="GO:0003682">
    <property type="term" value="F:chromatin binding"/>
    <property type="evidence" value="ECO:0000314"/>
    <property type="project" value="UniProtKB"/>
</dbReference>
<dbReference type="GO" id="GO:0042393">
    <property type="term" value="F:histone binding"/>
    <property type="evidence" value="ECO:0000353"/>
    <property type="project" value="UniProtKB"/>
</dbReference>
<dbReference type="GO" id="GO:0140005">
    <property type="term" value="F:histone H4K20me2 reader activity"/>
    <property type="evidence" value="ECO:0000314"/>
    <property type="project" value="UniProtKB"/>
</dbReference>
<dbReference type="GO" id="GO:0042802">
    <property type="term" value="F:identical protein binding"/>
    <property type="evidence" value="ECO:0000353"/>
    <property type="project" value="UniProtKB"/>
</dbReference>
<dbReference type="GO" id="GO:0035064">
    <property type="term" value="F:methylated histone binding"/>
    <property type="evidence" value="ECO:0000314"/>
    <property type="project" value="UniProtKB"/>
</dbReference>
<dbReference type="GO" id="GO:0031491">
    <property type="term" value="F:nucleosome binding"/>
    <property type="evidence" value="ECO:0000314"/>
    <property type="project" value="UniProtKB"/>
</dbReference>
<dbReference type="GO" id="GO:0032093">
    <property type="term" value="F:SAM domain binding"/>
    <property type="evidence" value="ECO:0000353"/>
    <property type="project" value="UniProtKB"/>
</dbReference>
<dbReference type="GO" id="GO:0008270">
    <property type="term" value="F:zinc ion binding"/>
    <property type="evidence" value="ECO:0007669"/>
    <property type="project" value="UniProtKB-KW"/>
</dbReference>
<dbReference type="GO" id="GO:0006325">
    <property type="term" value="P:chromatin organization"/>
    <property type="evidence" value="ECO:0000314"/>
    <property type="project" value="UniProtKB"/>
</dbReference>
<dbReference type="GO" id="GO:0140719">
    <property type="term" value="P:constitutive heterochromatin formation"/>
    <property type="evidence" value="ECO:0000314"/>
    <property type="project" value="UniProtKB"/>
</dbReference>
<dbReference type="GO" id="GO:0030097">
    <property type="term" value="P:hemopoiesis"/>
    <property type="evidence" value="ECO:0000270"/>
    <property type="project" value="UniProtKB"/>
</dbReference>
<dbReference type="GO" id="GO:0031507">
    <property type="term" value="P:heterochromatin formation"/>
    <property type="evidence" value="ECO:0000314"/>
    <property type="project" value="ComplexPortal"/>
</dbReference>
<dbReference type="GO" id="GO:0045892">
    <property type="term" value="P:negative regulation of DNA-templated transcription"/>
    <property type="evidence" value="ECO:0000314"/>
    <property type="project" value="UniProtKB"/>
</dbReference>
<dbReference type="GO" id="GO:0051726">
    <property type="term" value="P:regulation of cell cycle"/>
    <property type="evidence" value="ECO:0000303"/>
    <property type="project" value="UniProtKB"/>
</dbReference>
<dbReference type="GO" id="GO:0045652">
    <property type="term" value="P:regulation of megakaryocyte differentiation"/>
    <property type="evidence" value="ECO:0000314"/>
    <property type="project" value="UniProtKB"/>
</dbReference>
<dbReference type="GO" id="GO:0007088">
    <property type="term" value="P:regulation of mitotic nuclear division"/>
    <property type="evidence" value="ECO:0000315"/>
    <property type="project" value="UniProtKB"/>
</dbReference>
<dbReference type="CDD" id="cd20131">
    <property type="entry name" value="MBT_L3MBTL1_rpt1"/>
    <property type="match status" value="1"/>
</dbReference>
<dbReference type="CDD" id="cd20134">
    <property type="entry name" value="MBT_L3MBTL1_rpt2"/>
    <property type="match status" value="1"/>
</dbReference>
<dbReference type="CDD" id="cd20137">
    <property type="entry name" value="MBT_L3MBTL1_rpt3"/>
    <property type="match status" value="1"/>
</dbReference>
<dbReference type="FunFam" id="2.30.30.140:FF:000007">
    <property type="entry name" value="Lethal(3)malignant brain tumor-like protein 1"/>
    <property type="match status" value="2"/>
</dbReference>
<dbReference type="FunFam" id="4.10.320.30:FF:000001">
    <property type="entry name" value="Myelin transcription factor 1-like, a"/>
    <property type="match status" value="1"/>
</dbReference>
<dbReference type="Gene3D" id="2.30.30.140">
    <property type="match status" value="3"/>
</dbReference>
<dbReference type="Gene3D" id="4.10.320.30">
    <property type="match status" value="1"/>
</dbReference>
<dbReference type="IDEAL" id="IID00335"/>
<dbReference type="InterPro" id="IPR004092">
    <property type="entry name" value="Mbt"/>
</dbReference>
<dbReference type="InterPro" id="IPR047361">
    <property type="entry name" value="MBT_L3MBTL1_rpt1"/>
</dbReference>
<dbReference type="InterPro" id="IPR047362">
    <property type="entry name" value="MBT_L3MBTL1_rpt3"/>
</dbReference>
<dbReference type="InterPro" id="IPR050548">
    <property type="entry name" value="PcG_chromatin_remod_factors"/>
</dbReference>
<dbReference type="InterPro" id="IPR002515">
    <property type="entry name" value="Znf_C2H2C"/>
</dbReference>
<dbReference type="InterPro" id="IPR036060">
    <property type="entry name" value="Znf_C2H2C_sf"/>
</dbReference>
<dbReference type="PANTHER" id="PTHR12247:SF69">
    <property type="entry name" value="LETHAL(3)MALIGNANT BRAIN TUMOR-LIKE PROTEIN 1"/>
    <property type="match status" value="1"/>
</dbReference>
<dbReference type="PANTHER" id="PTHR12247">
    <property type="entry name" value="POLYCOMB GROUP PROTEIN"/>
    <property type="match status" value="1"/>
</dbReference>
<dbReference type="Pfam" id="PF02820">
    <property type="entry name" value="MBT"/>
    <property type="match status" value="3"/>
</dbReference>
<dbReference type="Pfam" id="PF01530">
    <property type="entry name" value="zf-C2HC"/>
    <property type="match status" value="1"/>
</dbReference>
<dbReference type="SMART" id="SM00561">
    <property type="entry name" value="MBT"/>
    <property type="match status" value="3"/>
</dbReference>
<dbReference type="SUPFAM" id="SSF103637">
    <property type="entry name" value="CCHHC domain"/>
    <property type="match status" value="1"/>
</dbReference>
<dbReference type="SUPFAM" id="SSF63748">
    <property type="entry name" value="Tudor/PWWP/MBT"/>
    <property type="match status" value="3"/>
</dbReference>
<dbReference type="PROSITE" id="PS51079">
    <property type="entry name" value="MBT"/>
    <property type="match status" value="3"/>
</dbReference>
<dbReference type="PROSITE" id="PS51802">
    <property type="entry name" value="ZF_CCHHC"/>
    <property type="match status" value="1"/>
</dbReference>
<evidence type="ECO:0000255" key="1">
    <source>
        <dbReference type="PROSITE-ProRule" id="PRU01143"/>
    </source>
</evidence>
<evidence type="ECO:0000256" key="2">
    <source>
        <dbReference type="SAM" id="MobiDB-lite"/>
    </source>
</evidence>
<evidence type="ECO:0000269" key="3">
    <source>
    </source>
</evidence>
<evidence type="ECO:0000269" key="4">
    <source>
    </source>
</evidence>
<evidence type="ECO:0000269" key="5">
    <source>
    </source>
</evidence>
<evidence type="ECO:0000269" key="6">
    <source>
    </source>
</evidence>
<evidence type="ECO:0000269" key="7">
    <source>
    </source>
</evidence>
<evidence type="ECO:0000269" key="8">
    <source>
    </source>
</evidence>
<evidence type="ECO:0000269" key="9">
    <source>
    </source>
</evidence>
<evidence type="ECO:0000269" key="10">
    <source>
    </source>
</evidence>
<evidence type="ECO:0000269" key="11">
    <source>
    </source>
</evidence>
<evidence type="ECO:0000269" key="12">
    <source>
    </source>
</evidence>
<evidence type="ECO:0000303" key="13">
    <source>
    </source>
</evidence>
<evidence type="ECO:0000303" key="14">
    <source>
    </source>
</evidence>
<evidence type="ECO:0000303" key="15">
    <source>
    </source>
</evidence>
<evidence type="ECO:0000303" key="16">
    <source>
    </source>
</evidence>
<evidence type="ECO:0000305" key="17"/>
<evidence type="ECO:0007744" key="18">
    <source>
    </source>
</evidence>
<evidence type="ECO:0007829" key="19">
    <source>
        <dbReference type="PDB" id="1OZ2"/>
    </source>
</evidence>
<evidence type="ECO:0007829" key="20">
    <source>
        <dbReference type="PDB" id="2RI5"/>
    </source>
</evidence>
<evidence type="ECO:0007829" key="21">
    <source>
        <dbReference type="PDB" id="2RJD"/>
    </source>
</evidence>
<gene>
    <name type="primary">L3MBTL1</name>
    <name type="synonym">KIAA0681</name>
    <name type="synonym">L3MBT</name>
    <name type="synonym">L3MBTL</name>
</gene>
<name>LMBL1_HUMAN</name>
<sequence>MHLVAGDSPGSGPHLPATAFIIPASSATLGLPSSALDVSCFPREPIHVGAPEQVAGCEPVSATVLPQLSAGPASSSTSTVRLLEWTEAAAPPPGGGLRFRISEYKPLNMAGVEQPPSPELRQEGVTEYEDGGAPAGDGEAGPQQAEDHPQNPPEDPNQDPPEDDSTCQCQACGPHQAAGPDLGSSNDGCPQLFQERSVIVENSSGSTSASELLKPMKKRKRREYQSPSEEESEPEAMEKQEEGKDPEGQPTASTPESEEWSSSQPATGEKKECWSWESYLEEQKAITAPVSLFQDSQAVTHNKNGFKLGMKLEGIDPQHPSMYFILTVAEVCGYRLRLHFDGYSECHDFWVNANSPDIHPAGWFEKTGHKLQPPKGYKEEEFSWSQYLRSTRAQAAPKHLFVSQSHSPPPLGFQVGMKLEAVDRMNPSLVCVASVTDVVDSRFLVHFDNWDDTYDYWCDPSSPYIHPVGWCQKQGKPLTPPQDYPDPDNFCWEKYLEETGASAVPTWAFKVRPPHSFLVNMKLEAVDRRNPALIRVASVEDVEDHRIKIHFDGWSHGYDFWIDADHPDIHPAGWCSKTGHPLQPPLGPREPSSASPGGCPPLSYRSLPHTRTSKYSFHHRKCPTPGCDGSGHVTGKFTAHHCLSGCPLAERNQSRLKAELSDSEASARKKNLSGFSPRKKPRHHGRIGRPPKYRKIPQEDFQTLTPDVVHQSLFMSALSAHPDRSLSVCWEQHCKLLPGVAGISASTVAKWTIDEVFGFVQTLTGCEDQARLFKDEARIVRVTHVSGKTLVWTVAQLGDLVCSDHLQEGKGILETGVHSLLCSLPTHLLAKLSFASDSQY</sequence>
<comment type="function">
    <text evidence="6 9 10 11">Polycomb group (PcG) protein that specifically recognizes and binds mono- and dimethyllysine residues on target proteins, thereby acting as a 'reader' of a network of post-translational modifications. PcG proteins maintain the transcriptionally repressive state of genes: acts as a chromatin compaction factor by recognizing and binding mono- and dimethylated histone H1b/H1-4 at 'Lys-26' (H1bK26me1 and H1bK26me2) and histone H4 at 'Lys-20' (H4K20me1 and H4K20me2), leading to condense chromatin and repress transcription. Recognizes and binds p53/TP53 monomethylated at 'Lys-382', leading to repress p53/TP53-target genes. Also recognizes and binds RB1/RB monomethylated at 'Lys-860'. Participates in the ETV6-mediated repression. Probably plays a role in cell proliferation. Overexpression induces multinucleated cells, suggesting that it is required to accomplish normal mitosis.</text>
</comment>
<comment type="subunit">
    <text evidence="4 6 7 8 9 10 11 12">Homodimer. Interacts with RB1/RB (when monomethylated at 'Lys-860'). Interacts with p53/TP53 (when monomethylated at 'Lys-382'). Interacts with CBX3, ETV6, KMT5A and VCP/p97.</text>
</comment>
<comment type="interaction">
    <interactant intactId="EBI-1265089">
        <id>Q9Y468</id>
    </interactant>
    <interactant intactId="EBI-358163">
        <id>P10412</id>
        <label>H1-4</label>
    </interactant>
    <organismsDiffer>false</organismsDiffer>
    <experiments>7</experiments>
</comment>
<comment type="interaction">
    <interactant intactId="EBI-1265089">
        <id>Q9Y468</id>
    </interactant>
    <interactant intactId="EBI-79722">
        <id>P68431</id>
        <label>H3C12</label>
    </interactant>
    <organismsDiffer>false</organismsDiffer>
    <experiments>2</experiments>
</comment>
<comment type="interaction">
    <interactant intactId="EBI-1265089">
        <id>Q9Y468</id>
    </interactant>
    <interactant intactId="EBI-302023">
        <id>P62805</id>
        <label>H4C9</label>
    </interactant>
    <organismsDiffer>false</organismsDiffer>
    <experiments>4</experiments>
</comment>
<comment type="interaction">
    <interactant intactId="EBI-1265089">
        <id>Q9Y468</id>
    </interactant>
    <interactant intactId="EBI-374819">
        <id>P49736</id>
        <label>MCM2</label>
    </interactant>
    <organismsDiffer>false</organismsDiffer>
    <experiments>3</experiments>
</comment>
<comment type="interaction">
    <interactant intactId="EBI-1265089">
        <id>Q9Y468</id>
    </interactant>
    <interactant intactId="EBI-359410">
        <id>P33992</id>
        <label>MCM5</label>
    </interactant>
    <organismsDiffer>false</organismsDiffer>
    <experiments>2</experiments>
</comment>
<comment type="subcellular location">
    <subcellularLocation>
        <location evidence="3">Nucleus</location>
    </subcellularLocation>
    <text>Excluded from the nucleolus. Does not colocalize with the PcG protein BMI1, suggesting that these two proteins do not belong to the same complex.</text>
</comment>
<comment type="alternative products">
    <event type="alternative splicing"/>
    <isoform>
        <id>Q9Y468-5</id>
        <name>5</name>
        <sequence type="displayed"/>
    </isoform>
    <isoform>
        <id>Q9Y468-1</id>
        <name>1</name>
        <name>mbt-I</name>
        <sequence type="described" ref="VSP_059458"/>
    </isoform>
    <isoform>
        <id>Q9Y468-2</id>
        <name>2</name>
        <name>mbt-II</name>
        <sequence type="described" ref="VSP_059458 VSP_059459"/>
    </isoform>
    <isoform>
        <id>Q9Y468-3</id>
        <name>3</name>
        <sequence type="described" ref="VSP_003901 VSP_059459"/>
    </isoform>
    <isoform>
        <id>Q9Y468-4</id>
        <name>4</name>
        <sequence type="described" ref="VSP_059458 VSP_059460"/>
    </isoform>
</comment>
<comment type="tissue specificity">
    <text evidence="3">Widely expressed. Expression is reduced in colorectal cancer cell line SW480 and promyelocytic leukemia cell line HL-60.</text>
</comment>
<comment type="developmental stage">
    <text>In interphase cells, it is scattered throughout the nucleoplasm. In mitotic cells, it strongly associates with condensed chromosomes from the prophase to telophase.</text>
</comment>
<comment type="domain">
    <text evidence="8">The MBT repeat 2 specifically recognizes and binds monomethylated and dimethylated proteins. In contrast, it does not bind trimethylated proteins. The MBT repeat 1 does not bind methylated peptides but inserts a proline ring in a Pro-Ser-Ser/Thr sequence context.</text>
</comment>
<comment type="PTM">
    <text evidence="12">Ubiquitinated in a VCP/p97-dependent way following DNA damage, leading to its removal from DNA damage sites, promoting accessibility of H4K20me2 mark for DNA repair protein TP53BP1, which is then recruited to DNA damage sites.</text>
</comment>
<comment type="miscellaneous">
    <text>The L3MBTL1 locus is imprinted. Paternal inherited gene is expressed, while the maternal inherited gene is silenced.</text>
</comment>
<comment type="sequence caution" evidence="17">
    <conflict type="erroneous gene model prediction">
        <sequence resource="EMBL-CDS" id="EAW75958"/>
    </conflict>
</comment>
<comment type="sequence caution" evidence="17">
    <conflict type="erroneous gene model prediction">
        <sequence resource="EMBL-CDS" id="EAW75961"/>
    </conflict>
</comment>
<comment type="sequence caution" evidence="17">
    <conflict type="erroneous gene model prediction">
        <sequence resource="EMBL-CDS" id="EAW75962"/>
    </conflict>
</comment>
<feature type="chain" id="PRO_0000084452" description="Lethal(3)malignant brain tumor-like protein 1">
    <location>
        <begin position="1"/>
        <end position="840"/>
    </location>
</feature>
<feature type="repeat" description="MBT 1">
    <location>
        <begin position="274"/>
        <end position="374"/>
    </location>
</feature>
<feature type="repeat" description="MBT 2">
    <location>
        <begin position="382"/>
        <end position="481"/>
    </location>
</feature>
<feature type="repeat" description="MBT 3">
    <location>
        <begin position="490"/>
        <end position="585"/>
    </location>
</feature>
<feature type="zinc finger region" description="CCHHC-type" evidence="1">
    <location>
        <begin position="613"/>
        <end position="656"/>
    </location>
</feature>
<feature type="region of interest" description="Disordered" evidence="2">
    <location>
        <begin position="127"/>
        <end position="269"/>
    </location>
</feature>
<feature type="region of interest" description="Interaction with monomethylated and dimethylated peptides">
    <location>
        <begin position="447"/>
        <end position="454"/>
    </location>
</feature>
<feature type="region of interest" description="Disordered" evidence="2">
    <location>
        <begin position="580"/>
        <end position="605"/>
    </location>
</feature>
<feature type="region of interest" description="Disordered" evidence="2">
    <location>
        <begin position="657"/>
        <end position="697"/>
    </location>
</feature>
<feature type="compositionally biased region" description="Acidic residues" evidence="2">
    <location>
        <begin position="156"/>
        <end position="165"/>
    </location>
</feature>
<feature type="compositionally biased region" description="Polar residues" evidence="2">
    <location>
        <begin position="200"/>
        <end position="210"/>
    </location>
</feature>
<feature type="compositionally biased region" description="Basic and acidic residues" evidence="2">
    <location>
        <begin position="236"/>
        <end position="247"/>
    </location>
</feature>
<feature type="compositionally biased region" description="Polar residues" evidence="2">
    <location>
        <begin position="250"/>
        <end position="266"/>
    </location>
</feature>
<feature type="compositionally biased region" description="Basic residues" evidence="2">
    <location>
        <begin position="677"/>
        <end position="695"/>
    </location>
</feature>
<feature type="binding site" evidence="1">
    <location>
        <position position="622"/>
    </location>
    <ligand>
        <name>Zn(2+)</name>
        <dbReference type="ChEBI" id="CHEBI:29105"/>
    </ligand>
</feature>
<feature type="binding site" evidence="1">
    <location>
        <position position="627"/>
    </location>
    <ligand>
        <name>Zn(2+)</name>
        <dbReference type="ChEBI" id="CHEBI:29105"/>
    </ligand>
</feature>
<feature type="binding site" evidence="1">
    <location>
        <position position="640"/>
    </location>
    <ligand>
        <name>Zn(2+)</name>
        <dbReference type="ChEBI" id="CHEBI:29105"/>
    </ligand>
</feature>
<feature type="binding site" evidence="1">
    <location>
        <position position="646"/>
    </location>
    <ligand>
        <name>Zn(2+)</name>
        <dbReference type="ChEBI" id="CHEBI:29105"/>
    </ligand>
</feature>
<feature type="site" description="Mediates recognition of monomethylated and dimethylated peptides">
    <location>
        <position position="423"/>
    </location>
</feature>
<feature type="site" description="Positioned at the entrance of MBT 2 and is required for recognition of monomethylated and dimethylated peptides">
    <location>
        <position position="426"/>
    </location>
</feature>
<feature type="modified residue" description="Phosphoserine" evidence="18">
    <location>
        <position position="117"/>
    </location>
</feature>
<feature type="splice variant" id="VSP_003901" description="In isoform 3." evidence="15">
    <location>
        <begin position="1"/>
        <end position="416"/>
    </location>
</feature>
<feature type="splice variant" id="VSP_059458" description="In isoform 1, isoform 2 and isoform 4." evidence="13 14 16">
    <original>MHLVAGDSPGSGPHLPATAFIIPASSATLGLPSSALDVSCFPREPIHVGAPEQVAGCEPVSATVLPQLSAGPASSSTSTVRLLEWTEAAAPPPGGGLR</original>
    <variation>MRRREGHGTDSEMGQGPVRESQSSDPPALQ</variation>
    <location>
        <begin position="1"/>
        <end position="98"/>
    </location>
</feature>
<feature type="splice variant" id="VSP_059459" description="In isoform 2 and isoform 3." evidence="13 15">
    <original>ARIVRVTHVSGKTLVWTVAQLGDLVCSDHLQEGKGILETGVHSLLCSLPTHLLAKLSFASDSQY</original>
    <variation>VRCKCRVGDRAGVTVLKTAGSRCPPQRHFC</variation>
    <location>
        <begin position="777"/>
        <end position="840"/>
    </location>
</feature>
<feature type="splice variant" id="VSP_059460" description="In isoform 4." evidence="16">
    <original>ARIVRVTHVSGKTLVWTVAQLGDLVCSDHLQEGKGILETGVHSLLCSLPTHLLAKLSFASDSQY</original>
    <variation>MIDGEAFLLLTQADIVKIMSVKLGPALKIYNAILMFKNADDTLK</variation>
    <location>
        <begin position="777"/>
        <end position="840"/>
    </location>
</feature>
<feature type="sequence variant" id="VAR_051097" description="In dbSNP:rs17857202." evidence="5">
    <original>S</original>
    <variation>T</variation>
    <location>
        <position position="117"/>
    </location>
</feature>
<feature type="sequence variant" id="VAR_051098" description="In dbSNP:rs6017104.">
    <original>I</original>
    <variation>M</variation>
    <location>
        <position position="547"/>
    </location>
</feature>
<feature type="mutagenesis site" description="Does not affect binding to monomethylated and dimethylated peptides." evidence="6">
    <original>D</original>
    <variation>N</variation>
    <location>
        <position position="316"/>
    </location>
</feature>
<feature type="mutagenesis site" description="Does not affect binding to monomethylated and dimethylated peptides." evidence="6">
    <original>F</original>
    <variation>A</variation>
    <location>
        <position position="340"/>
    </location>
</feature>
<feature type="mutagenesis site" description="Abolishes binding to monomethylated and dimethylated peptides." evidence="6 7 8 11">
    <original>D</original>
    <variation>A</variation>
    <location>
        <position position="423"/>
    </location>
</feature>
<feature type="mutagenesis site" description="Strongly impairs binding to monomethylated and dimethylated peptides. Abolishes binding to p53/TP53 monomethylated at 'Lys-382'." evidence="6 7 8 11">
    <original>D</original>
    <variation>N</variation>
    <location>
        <position position="423"/>
    </location>
</feature>
<feature type="mutagenesis site" description="Abolishes binding to monomethylated and dimethylated peptides." evidence="8 11">
    <original>N</original>
    <variation>A</variation>
    <location>
        <position position="426"/>
    </location>
</feature>
<feature type="mutagenesis site" description="Strongly impairs binding to monomethylated and dimethylated peptides. Abolishes binding to p53/TP53 monomethylated at 'Lys-382'." evidence="8 11">
    <original>N</original>
    <variation>Q</variation>
    <location>
        <position position="426"/>
    </location>
</feature>
<feature type="mutagenesis site" description="Strongly impairs binding to monomethylated and dimethylated peptides." evidence="7">
    <original>C</original>
    <variation>F</variation>
    <variation>R</variation>
    <location>
        <position position="431"/>
    </location>
</feature>
<feature type="mutagenesis site" description="Abolishes binding to monomethylated and dimethylated peptides. Abolishes binding to p53/TP53 monomethylated at 'Lys-382'." evidence="6 11">
    <original>F</original>
    <variation>A</variation>
    <location>
        <position position="447"/>
    </location>
</feature>
<feature type="mutagenesis site" description="Abolishes binding to p53/TP53 monomethylated at 'Lys-382'." evidence="11">
    <original>W</original>
    <variation>L</variation>
    <location>
        <position position="450"/>
    </location>
</feature>
<feature type="mutagenesis site" description="Abolishes binding to p53/TP53 monomethylated at 'Lys-382'." evidence="11">
    <original>Y</original>
    <variation>L</variation>
    <location>
        <position position="454"/>
    </location>
</feature>
<feature type="mutagenesis site" description="Does not affect binding to monomethylated and dimethylated peptides." evidence="6">
    <original>D</original>
    <variation>N</variation>
    <location>
        <position position="527"/>
    </location>
</feature>
<feature type="mutagenesis site" description="Does not affect binding to monomethylated and dimethylated peptides." evidence="6">
    <original>F</original>
    <variation>A</variation>
    <location>
        <position position="551"/>
    </location>
</feature>
<feature type="sequence conflict" description="In Ref. 2; BAG61241." evidence="17" ref="2">
    <original>T</original>
    <variation>A</variation>
    <location>
        <position position="254"/>
    </location>
</feature>
<feature type="sequence conflict" description="In Ref. 1; AAC69438." evidence="17" ref="1">
    <original>P</original>
    <variation>L</variation>
    <location>
        <position position="373"/>
    </location>
</feature>
<feature type="sequence conflict" description="In Ref. 1; AAC69438." evidence="17" ref="1">
    <original>LR</original>
    <variation>MC</variation>
    <location>
        <begin position="388"/>
        <end position="389"/>
    </location>
</feature>
<feature type="sequence conflict" description="In Ref. 1; AAC69438." evidence="17" ref="1">
    <original>L</original>
    <variation>M</variation>
    <location>
        <position position="400"/>
    </location>
</feature>
<feature type="sequence conflict" description="In Ref. 2; BAG61241." evidence="17" ref="2">
    <original>W</original>
    <variation>R</variation>
    <location>
        <position position="561"/>
    </location>
</feature>
<feature type="sequence conflict" description="In Ref. 1; AAC69438." evidence="17" ref="1">
    <original>S</original>
    <variation>P</variation>
    <location>
        <position position="663"/>
    </location>
</feature>
<feature type="helix" evidence="19">
    <location>
        <begin position="276"/>
        <end position="283"/>
    </location>
</feature>
<feature type="helix" evidence="19">
    <location>
        <begin position="290"/>
        <end position="292"/>
    </location>
</feature>
<feature type="helix" evidence="19">
    <location>
        <begin position="295"/>
        <end position="298"/>
    </location>
</feature>
<feature type="strand" evidence="19">
    <location>
        <begin position="311"/>
        <end position="316"/>
    </location>
</feature>
<feature type="strand" evidence="19">
    <location>
        <begin position="319"/>
        <end position="332"/>
    </location>
</feature>
<feature type="strand" evidence="19">
    <location>
        <begin position="335"/>
        <end position="340"/>
    </location>
</feature>
<feature type="helix" evidence="19">
    <location>
        <begin position="345"/>
        <end position="347"/>
    </location>
</feature>
<feature type="strand" evidence="19">
    <location>
        <begin position="349"/>
        <end position="352"/>
    </location>
</feature>
<feature type="strand" evidence="21">
    <location>
        <begin position="356"/>
        <end position="359"/>
    </location>
</feature>
<feature type="helix" evidence="19">
    <location>
        <begin position="363"/>
        <end position="367"/>
    </location>
</feature>
<feature type="helix" evidence="19">
    <location>
        <begin position="379"/>
        <end position="381"/>
    </location>
</feature>
<feature type="helix" evidence="19">
    <location>
        <begin position="384"/>
        <end position="391"/>
    </location>
</feature>
<feature type="helix" evidence="19">
    <location>
        <begin position="398"/>
        <end position="400"/>
    </location>
</feature>
<feature type="strand" evidence="19">
    <location>
        <begin position="418"/>
        <end position="422"/>
    </location>
</feature>
<feature type="turn" evidence="20">
    <location>
        <begin position="424"/>
        <end position="427"/>
    </location>
</feature>
<feature type="strand" evidence="19">
    <location>
        <begin position="430"/>
        <end position="439"/>
    </location>
</feature>
<feature type="strand" evidence="19">
    <location>
        <begin position="442"/>
        <end position="447"/>
    </location>
</feature>
<feature type="helix" evidence="19">
    <location>
        <begin position="452"/>
        <end position="454"/>
    </location>
</feature>
<feature type="strand" evidence="19">
    <location>
        <begin position="456"/>
        <end position="458"/>
    </location>
</feature>
<feature type="helix" evidence="19">
    <location>
        <begin position="470"/>
        <end position="474"/>
    </location>
</feature>
<feature type="helix" evidence="19">
    <location>
        <begin position="487"/>
        <end position="489"/>
    </location>
</feature>
<feature type="helix" evidence="19">
    <location>
        <begin position="492"/>
        <end position="499"/>
    </location>
</feature>
<feature type="helix" evidence="19">
    <location>
        <begin position="506"/>
        <end position="508"/>
    </location>
</feature>
<feature type="strand" evidence="19">
    <location>
        <begin position="522"/>
        <end position="526"/>
    </location>
</feature>
<feature type="strand" evidence="19">
    <location>
        <begin position="528"/>
        <end position="530"/>
    </location>
</feature>
<feature type="strand" evidence="19">
    <location>
        <begin position="534"/>
        <end position="542"/>
    </location>
</feature>
<feature type="strand" evidence="19">
    <location>
        <begin position="544"/>
        <end position="551"/>
    </location>
</feature>
<feature type="helix" evidence="19">
    <location>
        <begin position="556"/>
        <end position="558"/>
    </location>
</feature>
<feature type="strand" evidence="19">
    <location>
        <begin position="560"/>
        <end position="563"/>
    </location>
</feature>
<feature type="helix" evidence="19">
    <location>
        <begin position="574"/>
        <end position="578"/>
    </location>
</feature>
<feature type="sequence variant" id="VAR_082883" description="In dbSNP:rs6030948." evidence="17">
    <original>H</original>
    <variation>R</variation>
    <location sequence="Q9Y468-1">
        <position position="759"/>
    </location>
</feature>
<organism>
    <name type="scientific">Homo sapiens</name>
    <name type="common">Human</name>
    <dbReference type="NCBI Taxonomy" id="9606"/>
    <lineage>
        <taxon>Eukaryota</taxon>
        <taxon>Metazoa</taxon>
        <taxon>Chordata</taxon>
        <taxon>Craniata</taxon>
        <taxon>Vertebrata</taxon>
        <taxon>Euteleostomi</taxon>
        <taxon>Mammalia</taxon>
        <taxon>Eutheria</taxon>
        <taxon>Euarchontoglires</taxon>
        <taxon>Primates</taxon>
        <taxon>Haplorrhini</taxon>
        <taxon>Catarrhini</taxon>
        <taxon>Hominidae</taxon>
        <taxon>Homo</taxon>
    </lineage>
</organism>
<reference key="1">
    <citation type="journal article" date="1999" name="Oncogene">
        <title>A human homolog of Drosophila lethal(3)malignant brain tumor (l(3)mbt) protein associates with condensed mitotic chromosomes.</title>
        <authorList>
            <person name="Koga H."/>
            <person name="Matsui S."/>
            <person name="Hirota T."/>
            <person name="Takebayashi S."/>
            <person name="Okumura K."/>
            <person name="Saya H."/>
        </authorList>
    </citation>
    <scope>NUCLEOTIDE SEQUENCE [MRNA] (ISOFORMS 1 AND 2)</scope>
    <scope>SUBCELLULAR LOCATION</scope>
    <scope>TISSUE SPECIFICITY</scope>
    <source>
        <tissue>Brain</tissue>
    </source>
</reference>
<reference key="2">
    <citation type="journal article" date="2004" name="Nat. Genet.">
        <title>Complete sequencing and characterization of 21,243 full-length human cDNAs.</title>
        <authorList>
            <person name="Ota T."/>
            <person name="Suzuki Y."/>
            <person name="Nishikawa T."/>
            <person name="Otsuki T."/>
            <person name="Sugiyama T."/>
            <person name="Irie R."/>
            <person name="Wakamatsu A."/>
            <person name="Hayashi K."/>
            <person name="Sato H."/>
            <person name="Nagai K."/>
            <person name="Kimura K."/>
            <person name="Makita H."/>
            <person name="Sekine M."/>
            <person name="Obayashi M."/>
            <person name="Nishi T."/>
            <person name="Shibahara T."/>
            <person name="Tanaka T."/>
            <person name="Ishii S."/>
            <person name="Yamamoto J."/>
            <person name="Saito K."/>
            <person name="Kawai Y."/>
            <person name="Isono Y."/>
            <person name="Nakamura Y."/>
            <person name="Nagahari K."/>
            <person name="Murakami K."/>
            <person name="Yasuda T."/>
            <person name="Iwayanagi T."/>
            <person name="Wagatsuma M."/>
            <person name="Shiratori A."/>
            <person name="Sudo H."/>
            <person name="Hosoiri T."/>
            <person name="Kaku Y."/>
            <person name="Kodaira H."/>
            <person name="Kondo H."/>
            <person name="Sugawara M."/>
            <person name="Takahashi M."/>
            <person name="Kanda K."/>
            <person name="Yokoi T."/>
            <person name="Furuya T."/>
            <person name="Kikkawa E."/>
            <person name="Omura Y."/>
            <person name="Abe K."/>
            <person name="Kamihara K."/>
            <person name="Katsuta N."/>
            <person name="Sato K."/>
            <person name="Tanikawa M."/>
            <person name="Yamazaki M."/>
            <person name="Ninomiya K."/>
            <person name="Ishibashi T."/>
            <person name="Yamashita H."/>
            <person name="Murakawa K."/>
            <person name="Fujimori K."/>
            <person name="Tanai H."/>
            <person name="Kimata M."/>
            <person name="Watanabe M."/>
            <person name="Hiraoka S."/>
            <person name="Chiba Y."/>
            <person name="Ishida S."/>
            <person name="Ono Y."/>
            <person name="Takiguchi S."/>
            <person name="Watanabe S."/>
            <person name="Yosida M."/>
            <person name="Hotuta T."/>
            <person name="Kusano J."/>
            <person name="Kanehori K."/>
            <person name="Takahashi-Fujii A."/>
            <person name="Hara H."/>
            <person name="Tanase T.-O."/>
            <person name="Nomura Y."/>
            <person name="Togiya S."/>
            <person name="Komai F."/>
            <person name="Hara R."/>
            <person name="Takeuchi K."/>
            <person name="Arita M."/>
            <person name="Imose N."/>
            <person name="Musashino K."/>
            <person name="Yuuki H."/>
            <person name="Oshima A."/>
            <person name="Sasaki N."/>
            <person name="Aotsuka S."/>
            <person name="Yoshikawa Y."/>
            <person name="Matsunawa H."/>
            <person name="Ichihara T."/>
            <person name="Shiohata N."/>
            <person name="Sano S."/>
            <person name="Moriya S."/>
            <person name="Momiyama H."/>
            <person name="Satoh N."/>
            <person name="Takami S."/>
            <person name="Terashima Y."/>
            <person name="Suzuki O."/>
            <person name="Nakagawa S."/>
            <person name="Senoh A."/>
            <person name="Mizoguchi H."/>
            <person name="Goto Y."/>
            <person name="Shimizu F."/>
            <person name="Wakebe H."/>
            <person name="Hishigaki H."/>
            <person name="Watanabe T."/>
            <person name="Sugiyama A."/>
            <person name="Takemoto M."/>
            <person name="Kawakami B."/>
            <person name="Yamazaki M."/>
            <person name="Watanabe K."/>
            <person name="Kumagai A."/>
            <person name="Itakura S."/>
            <person name="Fukuzumi Y."/>
            <person name="Fujimori Y."/>
            <person name="Komiyama M."/>
            <person name="Tashiro H."/>
            <person name="Tanigami A."/>
            <person name="Fujiwara T."/>
            <person name="Ono T."/>
            <person name="Yamada K."/>
            <person name="Fujii Y."/>
            <person name="Ozaki K."/>
            <person name="Hirao M."/>
            <person name="Ohmori Y."/>
            <person name="Kawabata A."/>
            <person name="Hikiji T."/>
            <person name="Kobatake N."/>
            <person name="Inagaki H."/>
            <person name="Ikema Y."/>
            <person name="Okamoto S."/>
            <person name="Okitani R."/>
            <person name="Kawakami T."/>
            <person name="Noguchi S."/>
            <person name="Itoh T."/>
            <person name="Shigeta K."/>
            <person name="Senba T."/>
            <person name="Matsumura K."/>
            <person name="Nakajima Y."/>
            <person name="Mizuno T."/>
            <person name="Morinaga M."/>
            <person name="Sasaki M."/>
            <person name="Togashi T."/>
            <person name="Oyama M."/>
            <person name="Hata H."/>
            <person name="Watanabe M."/>
            <person name="Komatsu T."/>
            <person name="Mizushima-Sugano J."/>
            <person name="Satoh T."/>
            <person name="Shirai Y."/>
            <person name="Takahashi Y."/>
            <person name="Nakagawa K."/>
            <person name="Okumura K."/>
            <person name="Nagase T."/>
            <person name="Nomura N."/>
            <person name="Kikuchi H."/>
            <person name="Masuho Y."/>
            <person name="Yamashita R."/>
            <person name="Nakai K."/>
            <person name="Yada T."/>
            <person name="Nakamura Y."/>
            <person name="Ohara O."/>
            <person name="Isogai T."/>
            <person name="Sugano S."/>
        </authorList>
    </citation>
    <scope>NUCLEOTIDE SEQUENCE [LARGE SCALE MRNA] (ISOFORM 5)</scope>
</reference>
<reference key="3">
    <citation type="journal article" date="2007" name="BMC Genomics">
        <title>The full-ORF clone resource of the German cDNA consortium.</title>
        <authorList>
            <person name="Bechtel S."/>
            <person name="Rosenfelder H."/>
            <person name="Duda A."/>
            <person name="Schmidt C.P."/>
            <person name="Ernst U."/>
            <person name="Wellenreuther R."/>
            <person name="Mehrle A."/>
            <person name="Schuster C."/>
            <person name="Bahr A."/>
            <person name="Bloecker H."/>
            <person name="Heubner D."/>
            <person name="Hoerlein A."/>
            <person name="Michel G."/>
            <person name="Wedler H."/>
            <person name="Koehrer K."/>
            <person name="Ottenwaelder B."/>
            <person name="Poustka A."/>
            <person name="Wiemann S."/>
            <person name="Schupp I."/>
        </authorList>
    </citation>
    <scope>NUCLEOTIDE SEQUENCE [LARGE SCALE MRNA] (ISOFORM 3)</scope>
    <source>
        <tissue>Uterus</tissue>
    </source>
</reference>
<reference key="4">
    <citation type="journal article" date="2001" name="Nature">
        <title>The DNA sequence and comparative analysis of human chromosome 20.</title>
        <authorList>
            <person name="Deloukas P."/>
            <person name="Matthews L.H."/>
            <person name="Ashurst J.L."/>
            <person name="Burton J."/>
            <person name="Gilbert J.G.R."/>
            <person name="Jones M."/>
            <person name="Stavrides G."/>
            <person name="Almeida J.P."/>
            <person name="Babbage A.K."/>
            <person name="Bagguley C.L."/>
            <person name="Bailey J."/>
            <person name="Barlow K.F."/>
            <person name="Bates K.N."/>
            <person name="Beard L.M."/>
            <person name="Beare D.M."/>
            <person name="Beasley O.P."/>
            <person name="Bird C.P."/>
            <person name="Blakey S.E."/>
            <person name="Bridgeman A.M."/>
            <person name="Brown A.J."/>
            <person name="Buck D."/>
            <person name="Burrill W.D."/>
            <person name="Butler A.P."/>
            <person name="Carder C."/>
            <person name="Carter N.P."/>
            <person name="Chapman J.C."/>
            <person name="Clamp M."/>
            <person name="Clark G."/>
            <person name="Clark L.N."/>
            <person name="Clark S.Y."/>
            <person name="Clee C.M."/>
            <person name="Clegg S."/>
            <person name="Cobley V.E."/>
            <person name="Collier R.E."/>
            <person name="Connor R.E."/>
            <person name="Corby N.R."/>
            <person name="Coulson A."/>
            <person name="Coville G.J."/>
            <person name="Deadman R."/>
            <person name="Dhami P.D."/>
            <person name="Dunn M."/>
            <person name="Ellington A.G."/>
            <person name="Frankland J.A."/>
            <person name="Fraser A."/>
            <person name="French L."/>
            <person name="Garner P."/>
            <person name="Grafham D.V."/>
            <person name="Griffiths C."/>
            <person name="Griffiths M.N.D."/>
            <person name="Gwilliam R."/>
            <person name="Hall R.E."/>
            <person name="Hammond S."/>
            <person name="Harley J.L."/>
            <person name="Heath P.D."/>
            <person name="Ho S."/>
            <person name="Holden J.L."/>
            <person name="Howden P.J."/>
            <person name="Huckle E."/>
            <person name="Hunt A.R."/>
            <person name="Hunt S.E."/>
            <person name="Jekosch K."/>
            <person name="Johnson C.M."/>
            <person name="Johnson D."/>
            <person name="Kay M.P."/>
            <person name="Kimberley A.M."/>
            <person name="King A."/>
            <person name="Knights A."/>
            <person name="Laird G.K."/>
            <person name="Lawlor S."/>
            <person name="Lehvaeslaiho M.H."/>
            <person name="Leversha M.A."/>
            <person name="Lloyd C."/>
            <person name="Lloyd D.M."/>
            <person name="Lovell J.D."/>
            <person name="Marsh V.L."/>
            <person name="Martin S.L."/>
            <person name="McConnachie L.J."/>
            <person name="McLay K."/>
            <person name="McMurray A.A."/>
            <person name="Milne S.A."/>
            <person name="Mistry D."/>
            <person name="Moore M.J.F."/>
            <person name="Mullikin J.C."/>
            <person name="Nickerson T."/>
            <person name="Oliver K."/>
            <person name="Parker A."/>
            <person name="Patel R."/>
            <person name="Pearce T.A.V."/>
            <person name="Peck A.I."/>
            <person name="Phillimore B.J.C.T."/>
            <person name="Prathalingam S.R."/>
            <person name="Plumb R.W."/>
            <person name="Ramsay H."/>
            <person name="Rice C.M."/>
            <person name="Ross M.T."/>
            <person name="Scott C.E."/>
            <person name="Sehra H.K."/>
            <person name="Shownkeen R."/>
            <person name="Sims S."/>
            <person name="Skuce C.D."/>
            <person name="Smith M.L."/>
            <person name="Soderlund C."/>
            <person name="Steward C.A."/>
            <person name="Sulston J.E."/>
            <person name="Swann R.M."/>
            <person name="Sycamore N."/>
            <person name="Taylor R."/>
            <person name="Tee L."/>
            <person name="Thomas D.W."/>
            <person name="Thorpe A."/>
            <person name="Tracey A."/>
            <person name="Tromans A.C."/>
            <person name="Vaudin M."/>
            <person name="Wall M."/>
            <person name="Wallis J.M."/>
            <person name="Whitehead S.L."/>
            <person name="Whittaker P."/>
            <person name="Willey D.L."/>
            <person name="Williams L."/>
            <person name="Williams S.A."/>
            <person name="Wilming L."/>
            <person name="Wray P.W."/>
            <person name="Hubbard T."/>
            <person name="Durbin R.M."/>
            <person name="Bentley D.R."/>
            <person name="Beck S."/>
            <person name="Rogers J."/>
        </authorList>
    </citation>
    <scope>NUCLEOTIDE SEQUENCE [LARGE SCALE GENOMIC DNA]</scope>
</reference>
<reference key="5">
    <citation type="journal article" date="2004" name="Genome Res.">
        <title>The status, quality, and expansion of the NIH full-length cDNA project: the Mammalian Gene Collection (MGC).</title>
        <authorList>
            <consortium name="The MGC Project Team"/>
        </authorList>
    </citation>
    <scope>NUCLEOTIDE SEQUENCE [LARGE SCALE MRNA] (ISOFORM 1)</scope>
    <scope>VARIANT THR-117</scope>
    <source>
        <tissue>Brain</tissue>
    </source>
</reference>
<reference key="6">
    <citation type="journal article" date="1998" name="DNA Res.">
        <title>Prediction of the coding sequences of unidentified human genes. X. The complete sequences of 100 new cDNA clones from brain which can code for large proteins in vitro.</title>
        <authorList>
            <person name="Ishikawa K."/>
            <person name="Nagase T."/>
            <person name="Suyama M."/>
            <person name="Miyajima N."/>
            <person name="Tanaka A."/>
            <person name="Kotani H."/>
            <person name="Nomura N."/>
            <person name="Ohara O."/>
        </authorList>
    </citation>
    <scope>NUCLEOTIDE SEQUENCE [LARGE SCALE MRNA] OF 283-840 (ISOFORM 4)</scope>
    <source>
        <tissue>Brain</tissue>
    </source>
</reference>
<reference key="7">
    <citation type="journal article" date="2003" name="J. Biol. Chem.">
        <title>The human L(3)MBT Polycomb group protein is a transcriptional repressor and interacts physically and functionally with TEL (ETV6).</title>
        <authorList>
            <person name="Boccuni P."/>
            <person name="MacGrogan D."/>
            <person name="Scandura J.M."/>
            <person name="Nimer S.D."/>
        </authorList>
    </citation>
    <scope>INTERACTION WITH ETV6</scope>
</reference>
<reference key="8">
    <citation type="journal article" date="2004" name="Proc. Natl. Acad. Sci. U.S.A.">
        <title>Imprinting of the human L3MBTL gene, a polycomb family member located in a region of chromosome 20 deleted in human myeloid malignancies.</title>
        <authorList>
            <person name="Li J."/>
            <person name="Bench A.J."/>
            <person name="Vassiliou G.S."/>
            <person name="Fourouclas N."/>
            <person name="Ferguson-Smith A.C."/>
            <person name="Green A.R."/>
        </authorList>
    </citation>
    <scope>IMPRINTING</scope>
</reference>
<reference key="9">
    <citation type="journal article" date="2007" name="Cell">
        <title>L3MBTL1, a histone-methylation-dependent chromatin lock.</title>
        <authorList>
            <person name="Trojer P."/>
            <person name="Li G."/>
            <person name="Sims R.J. III"/>
            <person name="Vaquero A."/>
            <person name="Kalakonda N."/>
            <person name="Boccuni P."/>
            <person name="Lee D."/>
            <person name="Erdjument-Bromage H."/>
            <person name="Tempst P."/>
            <person name="Nimer S.D."/>
            <person name="Wang Y.H."/>
            <person name="Reinberg D."/>
        </authorList>
    </citation>
    <scope>FUNCTION</scope>
    <scope>INTERACTION WITH CBX3 AND HISTONES</scope>
    <scope>MUTAGENESIS OF ASP-316; PHE-340; ASP-423; PHE-447; ASP-527 AND PHE-551</scope>
</reference>
<reference key="10">
    <citation type="journal article" date="2008" name="Oncogene">
        <title>Histone H4 lysine 20 monomethylation promotes transcriptional repression by L3MBTL1.</title>
        <authorList>
            <person name="Kalakonda N."/>
            <person name="Fischle W."/>
            <person name="Boccuni P."/>
            <person name="Gurvich N."/>
            <person name="Hoya-Arias R."/>
            <person name="Zhao X."/>
            <person name="Miyata Y."/>
            <person name="Macgrogan D."/>
            <person name="Zhang J."/>
            <person name="Sims J.K."/>
            <person name="Rice J.C."/>
            <person name="Nimer S.D."/>
        </authorList>
    </citation>
    <scope>FUNCTION</scope>
    <scope>INTERACTION WITH KMT5A</scope>
</reference>
<reference key="11">
    <citation type="journal article" date="2010" name="J. Biol. Chem.">
        <title>Methylation of the retinoblastoma tumor suppressor by SMYD2.</title>
        <authorList>
            <person name="Saddic L.A."/>
            <person name="West L.E."/>
            <person name="Aslanian A."/>
            <person name="Yates J.R. III"/>
            <person name="Rubin S.M."/>
            <person name="Gozani O."/>
            <person name="Sage J."/>
        </authorList>
    </citation>
    <scope>FUNCTION</scope>
    <scope>INTERACTION WITH RB1</scope>
</reference>
<reference key="12">
    <citation type="journal article" date="2011" name="Nat. Struct. Mol. Biol.">
        <title>The AAA-ATPase VCP/p97 promotes 53BP1 recruitment by removing L3MBTL1 from DNA double-strand breaks.</title>
        <authorList>
            <person name="Acs K."/>
            <person name="Luijsterburg M.S."/>
            <person name="Ackermann L."/>
            <person name="Salomons F.A."/>
            <person name="Hoppe T."/>
            <person name="Dantuma N.P."/>
        </authorList>
    </citation>
    <scope>UBIQUITINATION</scope>
    <scope>INTERACTION WITH VCP</scope>
</reference>
<reference key="13">
    <citation type="journal article" date="2013" name="J. Proteome Res.">
        <title>Toward a comprehensive characterization of a human cancer cell phosphoproteome.</title>
        <authorList>
            <person name="Zhou H."/>
            <person name="Di Palma S."/>
            <person name="Preisinger C."/>
            <person name="Peng M."/>
            <person name="Polat A.N."/>
            <person name="Heck A.J."/>
            <person name="Mohammed S."/>
        </authorList>
    </citation>
    <scope>PHOSPHORYLATION [LARGE SCALE ANALYSIS] AT SER-117</scope>
    <scope>IDENTIFICATION BY MASS SPECTROMETRY [LARGE SCALE ANALYSIS]</scope>
    <source>
        <tissue>Erythroleukemia</tissue>
    </source>
</reference>
<reference key="14">
    <citation type="journal article" date="2003" name="Structure">
        <title>Malignant brain tumor repeats: a three-leaved propeller architecture with ligand/peptide binding pockets.</title>
        <authorList>
            <person name="Wang W.K."/>
            <person name="Tereshko V."/>
            <person name="Boccuni P."/>
            <person name="MacGrogan D."/>
            <person name="Nimer S.D."/>
            <person name="Patel D.J."/>
        </authorList>
    </citation>
    <scope>X-RAY CRYSTALLOGRAPHY (1.55 ANGSTROMS) OF 265-595</scope>
</reference>
<reference key="15">
    <citation type="journal article" date="2007" name="Mol. Cell">
        <title>Structural basis for lower lysine methylation state-specific readout by MBT repeats of L3MBTL1 and an engineered PHD finger.</title>
        <authorList>
            <person name="Li H."/>
            <person name="Fischle W."/>
            <person name="Wang W."/>
            <person name="Duncan E.M."/>
            <person name="Liang L."/>
            <person name="Murakami-Ishibe S."/>
            <person name="Allis C.D."/>
            <person name="Patel D.J."/>
        </authorList>
    </citation>
    <scope>X-RAY CRYSTALLOGRAPHY (2.0 ANGSTROMS) OF 274-587 IN COMPLEX WITH MONOMETHYLATED AND DIMETHYLATED PEPTIDES</scope>
    <scope>DOMAIN MBT REPEAT</scope>
    <scope>MUTAGENESIS OF ASP-423 AND ASN-426</scope>
</reference>
<reference key="16">
    <citation type="journal article" date="2007" name="Nat. Struct. Mol. Biol.">
        <title>L3MBTL1 recognition of mono- and dimethylated histones.</title>
        <authorList>
            <person name="Min J."/>
            <person name="Allali-Hassani A."/>
            <person name="Nady N."/>
            <person name="Qi C."/>
            <person name="Ouyang H."/>
            <person name="Liu Y."/>
            <person name="MacKenzie F."/>
            <person name="Vedadi M."/>
            <person name="Arrowsmith C.H."/>
        </authorList>
    </citation>
    <scope>X-RAY CRYSTALLOGRAPHY (2.05 ANGSTROMS) OF 268-598 IN COMPLEX WITH DIMETHYLATED HISTONE H4</scope>
    <scope>MUTAGENESIS OF ASP-423 AND CYS-431</scope>
</reference>
<reference key="17">
    <citation type="journal article" date="2008" name="Nat. Struct. Mol. Biol.">
        <authorList>
            <person name="Min J."/>
            <person name="Allali-Hassani A."/>
            <person name="Nady N."/>
            <person name="Qi C."/>
            <person name="Ouyang H."/>
            <person name="Liu Y."/>
            <person name="MacKenzie F."/>
            <person name="Vedadi M."/>
            <person name="Arrowsmith C.H."/>
        </authorList>
    </citation>
    <scope>ERRATUM OF PUBMED:18026117</scope>
</reference>
<reference key="18">
    <citation type="journal article" date="2010" name="J. Biol. Chem.">
        <title>The MBT repeats of L3MBTL1 link SET8-mediated p53 methylation at lysine 382 to target gene repression.</title>
        <authorList>
            <person name="West L.E."/>
            <person name="Roy S."/>
            <person name="Lachmi-Weiner K."/>
            <person name="Hayashi R."/>
            <person name="Shi X."/>
            <person name="Appella E."/>
            <person name="Kutateladze T.G."/>
            <person name="Gozani O."/>
        </authorList>
    </citation>
    <scope>X-RAY CRYSTALLOGRAPHY (2.5 ANGSTROMS) OF 259-598 IN COMPLEX WITH MONOMETHYLATED PEPTIDE</scope>
    <scope>FUNCTION</scope>
    <scope>INTERACTION WITH TP53</scope>
    <scope>MUTAGENESIS OF ASP-423; ASN-426; PHE-447; TRP-450 AND TYR-454</scope>
</reference>
<reference key="19">
    <citation type="submission" date="2010-11" db="PDB data bank">
        <title>Small molecule ligands of methyl-lysine binding proteins.</title>
        <authorList>
            <consortium name="Structural genomics consortium (SGC)"/>
        </authorList>
    </citation>
    <scope>X-RAY CRYSTALLOGRAPHY (2.55 ANGSTROMS) OF 268-590</scope>
</reference>
<protein>
    <recommendedName>
        <fullName>Lethal(3)malignant brain tumor-like protein 1</fullName>
        <shortName>H-l(3)mbt</shortName>
        <shortName>H-l(3)mbt protein</shortName>
        <shortName>L(3)mbt-like</shortName>
    </recommendedName>
    <alternativeName>
        <fullName>L(3)mbt protein homolog</fullName>
    </alternativeName>
    <alternativeName>
        <fullName>L3MBTL1</fullName>
    </alternativeName>
</protein>
<proteinExistence type="evidence at protein level"/>
<keyword id="KW-0002">3D-structure</keyword>
<keyword id="KW-0025">Alternative splicing</keyword>
<keyword id="KW-0156">Chromatin regulator</keyword>
<keyword id="KW-0479">Metal-binding</keyword>
<keyword id="KW-0539">Nucleus</keyword>
<keyword id="KW-0597">Phosphoprotein</keyword>
<keyword id="KW-1267">Proteomics identification</keyword>
<keyword id="KW-1185">Reference proteome</keyword>
<keyword id="KW-0677">Repeat</keyword>
<keyword id="KW-0678">Repressor</keyword>
<keyword id="KW-0804">Transcription</keyword>
<keyword id="KW-0805">Transcription regulation</keyword>
<keyword id="KW-0832">Ubl conjugation</keyword>
<keyword id="KW-0862">Zinc</keyword>
<keyword id="KW-0863">Zinc-finger</keyword>